<gene>
    <name evidence="1" type="primary">rpl23</name>
    <name type="ordered locus">MmarC5_0031</name>
</gene>
<protein>
    <recommendedName>
        <fullName evidence="1">Large ribosomal subunit protein uL23</fullName>
    </recommendedName>
    <alternativeName>
        <fullName evidence="2">50S ribosomal protein L23</fullName>
    </alternativeName>
</protein>
<evidence type="ECO:0000255" key="1">
    <source>
        <dbReference type="HAMAP-Rule" id="MF_01369"/>
    </source>
</evidence>
<evidence type="ECO:0000305" key="2"/>
<accession>A4FVY0</accession>
<name>RL23_METM5</name>
<reference key="1">
    <citation type="submission" date="2007-03" db="EMBL/GenBank/DDBJ databases">
        <title>Complete sequence of chromosome of Methanococcus maripaludis C5.</title>
        <authorList>
            <consortium name="US DOE Joint Genome Institute"/>
            <person name="Copeland A."/>
            <person name="Lucas S."/>
            <person name="Lapidus A."/>
            <person name="Barry K."/>
            <person name="Glavina del Rio T."/>
            <person name="Dalin E."/>
            <person name="Tice H."/>
            <person name="Pitluck S."/>
            <person name="Chertkov O."/>
            <person name="Brettin T."/>
            <person name="Bruce D."/>
            <person name="Han C."/>
            <person name="Detter J.C."/>
            <person name="Schmutz J."/>
            <person name="Larimer F."/>
            <person name="Land M."/>
            <person name="Hauser L."/>
            <person name="Kyrpides N."/>
            <person name="Mikhailova N."/>
            <person name="Sieprawska-Lupa M."/>
            <person name="Whitman W.B."/>
            <person name="Richardson P."/>
        </authorList>
    </citation>
    <scope>NUCLEOTIDE SEQUENCE [LARGE SCALE GENOMIC DNA]</scope>
    <source>
        <strain>C5 / ATCC BAA-1333</strain>
    </source>
</reference>
<organism>
    <name type="scientific">Methanococcus maripaludis (strain C5 / ATCC BAA-1333)</name>
    <dbReference type="NCBI Taxonomy" id="402880"/>
    <lineage>
        <taxon>Archaea</taxon>
        <taxon>Methanobacteriati</taxon>
        <taxon>Methanobacteriota</taxon>
        <taxon>Methanomada group</taxon>
        <taxon>Methanococci</taxon>
        <taxon>Methanococcales</taxon>
        <taxon>Methanococcaceae</taxon>
        <taxon>Methanococcus</taxon>
    </lineage>
</organism>
<keyword id="KW-0687">Ribonucleoprotein</keyword>
<keyword id="KW-0689">Ribosomal protein</keyword>
<keyword id="KW-0694">RNA-binding</keyword>
<keyword id="KW-0699">rRNA-binding</keyword>
<dbReference type="EMBL" id="CP000609">
    <property type="protein sequence ID" value="ABO34348.1"/>
    <property type="molecule type" value="Genomic_DNA"/>
</dbReference>
<dbReference type="RefSeq" id="WP_011867810.1">
    <property type="nucleotide sequence ID" value="NC_009135.1"/>
</dbReference>
<dbReference type="SMR" id="A4FVY0"/>
<dbReference type="STRING" id="402880.MmarC5_0031"/>
<dbReference type="GeneID" id="4928178"/>
<dbReference type="KEGG" id="mmq:MmarC5_0031"/>
<dbReference type="eggNOG" id="arCOG04072">
    <property type="taxonomic scope" value="Archaea"/>
</dbReference>
<dbReference type="HOGENOM" id="CLU_037562_4_2_2"/>
<dbReference type="OrthoDB" id="7751at2157"/>
<dbReference type="Proteomes" id="UP000000253">
    <property type="component" value="Chromosome"/>
</dbReference>
<dbReference type="GO" id="GO:1990904">
    <property type="term" value="C:ribonucleoprotein complex"/>
    <property type="evidence" value="ECO:0007669"/>
    <property type="project" value="UniProtKB-KW"/>
</dbReference>
<dbReference type="GO" id="GO:0005840">
    <property type="term" value="C:ribosome"/>
    <property type="evidence" value="ECO:0007669"/>
    <property type="project" value="UniProtKB-KW"/>
</dbReference>
<dbReference type="GO" id="GO:0019843">
    <property type="term" value="F:rRNA binding"/>
    <property type="evidence" value="ECO:0007669"/>
    <property type="project" value="UniProtKB-UniRule"/>
</dbReference>
<dbReference type="GO" id="GO:0003735">
    <property type="term" value="F:structural constituent of ribosome"/>
    <property type="evidence" value="ECO:0007669"/>
    <property type="project" value="InterPro"/>
</dbReference>
<dbReference type="GO" id="GO:0006412">
    <property type="term" value="P:translation"/>
    <property type="evidence" value="ECO:0007669"/>
    <property type="project" value="UniProtKB-UniRule"/>
</dbReference>
<dbReference type="FunFam" id="3.30.70.330:FF:000532">
    <property type="entry name" value="50S ribosomal protein L23"/>
    <property type="match status" value="1"/>
</dbReference>
<dbReference type="Gene3D" id="3.30.70.330">
    <property type="match status" value="1"/>
</dbReference>
<dbReference type="HAMAP" id="MF_01369_A">
    <property type="entry name" value="Ribosomal_uL23_A"/>
    <property type="match status" value="1"/>
</dbReference>
<dbReference type="HAMAP" id="MF_01369_B">
    <property type="entry name" value="Ribosomal_uL23_B"/>
    <property type="match status" value="1"/>
</dbReference>
<dbReference type="InterPro" id="IPR012677">
    <property type="entry name" value="Nucleotide-bd_a/b_plait_sf"/>
</dbReference>
<dbReference type="InterPro" id="IPR019985">
    <property type="entry name" value="Ribosomal_uL23"/>
</dbReference>
<dbReference type="InterPro" id="IPR013025">
    <property type="entry name" value="Ribosomal_uL23-like"/>
</dbReference>
<dbReference type="InterPro" id="IPR012678">
    <property type="entry name" value="Ribosomal_uL23/eL15/eS24_sf"/>
</dbReference>
<dbReference type="InterPro" id="IPR001014">
    <property type="entry name" value="Ribosomal_uL23_CS"/>
</dbReference>
<dbReference type="NCBIfam" id="NF011118">
    <property type="entry name" value="PRK14548.1"/>
    <property type="match status" value="1"/>
</dbReference>
<dbReference type="NCBIfam" id="TIGR03636">
    <property type="entry name" value="uL23_arch"/>
    <property type="match status" value="1"/>
</dbReference>
<dbReference type="PANTHER" id="PTHR11620">
    <property type="entry name" value="60S RIBOSOMAL PROTEIN L23A"/>
    <property type="match status" value="1"/>
</dbReference>
<dbReference type="Pfam" id="PF00276">
    <property type="entry name" value="Ribosomal_L23"/>
    <property type="match status" value="1"/>
</dbReference>
<dbReference type="SUPFAM" id="SSF54189">
    <property type="entry name" value="Ribosomal proteins S24e, L23 and L15e"/>
    <property type="match status" value="1"/>
</dbReference>
<dbReference type="PROSITE" id="PS00050">
    <property type="entry name" value="RIBOSOMAL_L23"/>
    <property type="match status" value="1"/>
</dbReference>
<feature type="chain" id="PRO_1000068107" description="Large ribosomal subunit protein uL23">
    <location>
        <begin position="1"/>
        <end position="86"/>
    </location>
</feature>
<sequence length="86" mass="9598">MDAFDVIKTPIVSEKTMKLIEEENRLVFYVERKATKADIRAAIKELFDAEVADINTSITPKGKKKAYITLKAEYNAGEVAASLGIY</sequence>
<proteinExistence type="inferred from homology"/>
<comment type="function">
    <text evidence="1">Binds to 23S rRNA. One of the proteins that surrounds the polypeptide exit tunnel on the outside of the ribosome.</text>
</comment>
<comment type="subunit">
    <text evidence="1">Part of the 50S ribosomal subunit. Contacts protein L29.</text>
</comment>
<comment type="similarity">
    <text evidence="1">Belongs to the universal ribosomal protein uL23 family.</text>
</comment>